<name>RHLB_YERPP</name>
<dbReference type="EC" id="3.6.4.13" evidence="1"/>
<dbReference type="EMBL" id="CP000668">
    <property type="protein sequence ID" value="ABP41840.1"/>
    <property type="molecule type" value="Genomic_DNA"/>
</dbReference>
<dbReference type="RefSeq" id="WP_002228177.1">
    <property type="nucleotide sequence ID" value="NZ_CP009715.1"/>
</dbReference>
<dbReference type="SMR" id="A4TRC8"/>
<dbReference type="GeneID" id="96663646"/>
<dbReference type="KEGG" id="ypp:YPDSF_3487"/>
<dbReference type="PATRIC" id="fig|386656.14.peg.837"/>
<dbReference type="GO" id="GO:0005829">
    <property type="term" value="C:cytosol"/>
    <property type="evidence" value="ECO:0007669"/>
    <property type="project" value="TreeGrafter"/>
</dbReference>
<dbReference type="GO" id="GO:0005524">
    <property type="term" value="F:ATP binding"/>
    <property type="evidence" value="ECO:0007669"/>
    <property type="project" value="UniProtKB-UniRule"/>
</dbReference>
<dbReference type="GO" id="GO:0016887">
    <property type="term" value="F:ATP hydrolysis activity"/>
    <property type="evidence" value="ECO:0007669"/>
    <property type="project" value="RHEA"/>
</dbReference>
<dbReference type="GO" id="GO:0003723">
    <property type="term" value="F:RNA binding"/>
    <property type="evidence" value="ECO:0007669"/>
    <property type="project" value="UniProtKB-UniRule"/>
</dbReference>
<dbReference type="GO" id="GO:0003724">
    <property type="term" value="F:RNA helicase activity"/>
    <property type="evidence" value="ECO:0007669"/>
    <property type="project" value="UniProtKB-UniRule"/>
</dbReference>
<dbReference type="GO" id="GO:0006401">
    <property type="term" value="P:RNA catabolic process"/>
    <property type="evidence" value="ECO:0007669"/>
    <property type="project" value="UniProtKB-UniRule"/>
</dbReference>
<dbReference type="CDD" id="cd00268">
    <property type="entry name" value="DEADc"/>
    <property type="match status" value="1"/>
</dbReference>
<dbReference type="CDD" id="cd18787">
    <property type="entry name" value="SF2_C_DEAD"/>
    <property type="match status" value="1"/>
</dbReference>
<dbReference type="FunFam" id="3.40.50.300:FF:000312">
    <property type="entry name" value="ATP-dependent RNA helicase RhlB"/>
    <property type="match status" value="1"/>
</dbReference>
<dbReference type="Gene3D" id="3.40.50.300">
    <property type="entry name" value="P-loop containing nucleotide triphosphate hydrolases"/>
    <property type="match status" value="2"/>
</dbReference>
<dbReference type="HAMAP" id="MF_00661">
    <property type="entry name" value="DEAD_helicase_RhlB"/>
    <property type="match status" value="1"/>
</dbReference>
<dbReference type="InterPro" id="IPR011545">
    <property type="entry name" value="DEAD/DEAH_box_helicase_dom"/>
</dbReference>
<dbReference type="InterPro" id="IPR050079">
    <property type="entry name" value="DEAD_box_RNA_helicase"/>
</dbReference>
<dbReference type="InterPro" id="IPR014001">
    <property type="entry name" value="Helicase_ATP-bd"/>
</dbReference>
<dbReference type="InterPro" id="IPR001650">
    <property type="entry name" value="Helicase_C-like"/>
</dbReference>
<dbReference type="InterPro" id="IPR027417">
    <property type="entry name" value="P-loop_NTPase"/>
</dbReference>
<dbReference type="InterPro" id="IPR000629">
    <property type="entry name" value="RNA-helicase_DEAD-box_CS"/>
</dbReference>
<dbReference type="InterPro" id="IPR023554">
    <property type="entry name" value="RNA_helicase_ATP-dep_RhlB"/>
</dbReference>
<dbReference type="InterPro" id="IPR014014">
    <property type="entry name" value="RNA_helicase_DEAD_Q_motif"/>
</dbReference>
<dbReference type="NCBIfam" id="NF003419">
    <property type="entry name" value="PRK04837.1"/>
    <property type="match status" value="1"/>
</dbReference>
<dbReference type="PANTHER" id="PTHR47959:SF10">
    <property type="entry name" value="ATP-DEPENDENT RNA HELICASE RHLB"/>
    <property type="match status" value="1"/>
</dbReference>
<dbReference type="PANTHER" id="PTHR47959">
    <property type="entry name" value="ATP-DEPENDENT RNA HELICASE RHLE-RELATED"/>
    <property type="match status" value="1"/>
</dbReference>
<dbReference type="Pfam" id="PF00270">
    <property type="entry name" value="DEAD"/>
    <property type="match status" value="1"/>
</dbReference>
<dbReference type="Pfam" id="PF00271">
    <property type="entry name" value="Helicase_C"/>
    <property type="match status" value="1"/>
</dbReference>
<dbReference type="SMART" id="SM00487">
    <property type="entry name" value="DEXDc"/>
    <property type="match status" value="1"/>
</dbReference>
<dbReference type="SMART" id="SM00490">
    <property type="entry name" value="HELICc"/>
    <property type="match status" value="1"/>
</dbReference>
<dbReference type="SUPFAM" id="SSF52540">
    <property type="entry name" value="P-loop containing nucleoside triphosphate hydrolases"/>
    <property type="match status" value="1"/>
</dbReference>
<dbReference type="PROSITE" id="PS00039">
    <property type="entry name" value="DEAD_ATP_HELICASE"/>
    <property type="match status" value="1"/>
</dbReference>
<dbReference type="PROSITE" id="PS51192">
    <property type="entry name" value="HELICASE_ATP_BIND_1"/>
    <property type="match status" value="1"/>
</dbReference>
<dbReference type="PROSITE" id="PS51194">
    <property type="entry name" value="HELICASE_CTER"/>
    <property type="match status" value="1"/>
</dbReference>
<dbReference type="PROSITE" id="PS51195">
    <property type="entry name" value="Q_MOTIF"/>
    <property type="match status" value="1"/>
</dbReference>
<protein>
    <recommendedName>
        <fullName evidence="1">ATP-dependent RNA helicase RhlB</fullName>
        <ecNumber evidence="1">3.6.4.13</ecNumber>
    </recommendedName>
</protein>
<comment type="function">
    <text evidence="1">DEAD-box RNA helicase involved in RNA degradation. Has RNA-dependent ATPase activity and unwinds double-stranded RNA.</text>
</comment>
<comment type="catalytic activity">
    <reaction evidence="1">
        <text>ATP + H2O = ADP + phosphate + H(+)</text>
        <dbReference type="Rhea" id="RHEA:13065"/>
        <dbReference type="ChEBI" id="CHEBI:15377"/>
        <dbReference type="ChEBI" id="CHEBI:15378"/>
        <dbReference type="ChEBI" id="CHEBI:30616"/>
        <dbReference type="ChEBI" id="CHEBI:43474"/>
        <dbReference type="ChEBI" id="CHEBI:456216"/>
        <dbReference type="EC" id="3.6.4.13"/>
    </reaction>
</comment>
<comment type="subunit">
    <text evidence="1">Component of the RNA degradosome, which is a multiprotein complex involved in RNA processing and mRNA degradation.</text>
</comment>
<comment type="subcellular location">
    <subcellularLocation>
        <location evidence="1">Cytoplasm</location>
    </subcellularLocation>
</comment>
<comment type="similarity">
    <text evidence="1">Belongs to the DEAD box helicase family. RhlB subfamily.</text>
</comment>
<accession>A4TRC8</accession>
<proteinExistence type="inferred from homology"/>
<evidence type="ECO:0000255" key="1">
    <source>
        <dbReference type="HAMAP-Rule" id="MF_00661"/>
    </source>
</evidence>
<evidence type="ECO:0000256" key="2">
    <source>
        <dbReference type="SAM" id="MobiDB-lite"/>
    </source>
</evidence>
<sequence length="428" mass="47947">MSKTHLTEQKFSDFALHPLVVEALENKGFQYCTPIQALALPLTLSGRDVAGQAQTGTGKTLAFLASTFHYLLSHPAEEGRQTNQPRALIMAPTRELAVQIHSDAESLSQVTGLKLGLAYGGDGYDKQLKVLESGVDILIGTTGRLIDYAKQNYINLGAIQVVVLDEADRMYDLGFIKDIRWLFRRMPSVDKRLNMLFSATLSYRVRELAFEQMNNAEYVEVEPLQKTGHRIKEELFYPSNEEKMRLLQTLIEEEWPDRCIIFANTKHRCEEIWGHLAADGHRVGLLTGDVAQKKRLRILEDFTKGDLDILVATDVAARGLHIPLVTHVFNYDLPDDCEDYVHRIGRTGRAGESGHSISLACEEYALNLPAIETYTGHSIPVSKYNSDALLTDLPAPKRLARTRTGNGPRRNSAPRRSGAPRNNRKRPG</sequence>
<gene>
    <name evidence="1" type="primary">rhlB</name>
    <name type="ordered locus">YPDSF_3487</name>
</gene>
<reference key="1">
    <citation type="submission" date="2007-02" db="EMBL/GenBank/DDBJ databases">
        <title>Complete sequence of chromosome of Yersinia pestis Pestoides F.</title>
        <authorList>
            <consortium name="US DOE Joint Genome Institute"/>
            <person name="Copeland A."/>
            <person name="Lucas S."/>
            <person name="Lapidus A."/>
            <person name="Barry K."/>
            <person name="Detter J.C."/>
            <person name="Glavina del Rio T."/>
            <person name="Hammon N."/>
            <person name="Israni S."/>
            <person name="Dalin E."/>
            <person name="Tice H."/>
            <person name="Pitluck S."/>
            <person name="Di Bartolo G."/>
            <person name="Chain P."/>
            <person name="Malfatti S."/>
            <person name="Shin M."/>
            <person name="Vergez L."/>
            <person name="Schmutz J."/>
            <person name="Larimer F."/>
            <person name="Land M."/>
            <person name="Hauser L."/>
            <person name="Worsham P."/>
            <person name="Chu M."/>
            <person name="Bearden S."/>
            <person name="Garcia E."/>
            <person name="Richardson P."/>
        </authorList>
    </citation>
    <scope>NUCLEOTIDE SEQUENCE [LARGE SCALE GENOMIC DNA]</scope>
    <source>
        <strain>Pestoides F</strain>
    </source>
</reference>
<keyword id="KW-0067">ATP-binding</keyword>
<keyword id="KW-0963">Cytoplasm</keyword>
<keyword id="KW-0347">Helicase</keyword>
<keyword id="KW-0378">Hydrolase</keyword>
<keyword id="KW-0547">Nucleotide-binding</keyword>
<keyword id="KW-0694">RNA-binding</keyword>
<feature type="chain" id="PRO_1000082883" description="ATP-dependent RNA helicase RhlB">
    <location>
        <begin position="1"/>
        <end position="428"/>
    </location>
</feature>
<feature type="domain" description="Helicase ATP-binding" evidence="1">
    <location>
        <begin position="40"/>
        <end position="219"/>
    </location>
</feature>
<feature type="domain" description="Helicase C-terminal" evidence="1">
    <location>
        <begin position="245"/>
        <end position="390"/>
    </location>
</feature>
<feature type="region of interest" description="Disordered" evidence="2">
    <location>
        <begin position="394"/>
        <end position="428"/>
    </location>
</feature>
<feature type="short sequence motif" description="Q motif">
    <location>
        <begin position="9"/>
        <end position="37"/>
    </location>
</feature>
<feature type="short sequence motif" description="DEAD box">
    <location>
        <begin position="165"/>
        <end position="168"/>
    </location>
</feature>
<feature type="binding site" evidence="1">
    <location>
        <begin position="53"/>
        <end position="60"/>
    </location>
    <ligand>
        <name>ATP</name>
        <dbReference type="ChEBI" id="CHEBI:30616"/>
    </ligand>
</feature>
<organism>
    <name type="scientific">Yersinia pestis (strain Pestoides F)</name>
    <dbReference type="NCBI Taxonomy" id="386656"/>
    <lineage>
        <taxon>Bacteria</taxon>
        <taxon>Pseudomonadati</taxon>
        <taxon>Pseudomonadota</taxon>
        <taxon>Gammaproteobacteria</taxon>
        <taxon>Enterobacterales</taxon>
        <taxon>Yersiniaceae</taxon>
        <taxon>Yersinia</taxon>
    </lineage>
</organism>